<dbReference type="EMBL" id="X54323">
    <property type="protein sequence ID" value="CAA38221.1"/>
    <property type="molecule type" value="Genomic_DNA"/>
</dbReference>
<dbReference type="EMBL" id="Z48784">
    <property type="protein sequence ID" value="CAA88703.1"/>
    <property type="molecule type" value="Genomic_DNA"/>
</dbReference>
<dbReference type="EMBL" id="Z46727">
    <property type="protein sequence ID" value="CAA86695.1"/>
    <property type="molecule type" value="Genomic_DNA"/>
</dbReference>
<dbReference type="EMBL" id="BK006938">
    <property type="protein sequence ID" value="DAA12032.1"/>
    <property type="molecule type" value="Genomic_DNA"/>
</dbReference>
<dbReference type="PIR" id="A39610">
    <property type="entry name" value="A39610"/>
</dbReference>
<dbReference type="RefSeq" id="NP_010475.1">
    <property type="nucleotide sequence ID" value="NM_001180497.1"/>
</dbReference>
<dbReference type="PDB" id="1MQS">
    <property type="method" value="X-ray"/>
    <property type="resolution" value="3.00 A"/>
    <property type="chains" value="A=1-666"/>
</dbReference>
<dbReference type="PDBsum" id="1MQS"/>
<dbReference type="SMR" id="P22213"/>
<dbReference type="BioGRID" id="32242">
    <property type="interactions" value="339"/>
</dbReference>
<dbReference type="DIP" id="DIP-2940N"/>
<dbReference type="FunCoup" id="P22213">
    <property type="interactions" value="1441"/>
</dbReference>
<dbReference type="IntAct" id="P22213">
    <property type="interactions" value="18"/>
</dbReference>
<dbReference type="MINT" id="P22213"/>
<dbReference type="STRING" id="4932.YDR189W"/>
<dbReference type="iPTMnet" id="P22213"/>
<dbReference type="PaxDb" id="4932-YDR189W"/>
<dbReference type="PeptideAtlas" id="P22213"/>
<dbReference type="EnsemblFungi" id="YDR189W_mRNA">
    <property type="protein sequence ID" value="YDR189W"/>
    <property type="gene ID" value="YDR189W"/>
</dbReference>
<dbReference type="GeneID" id="851770"/>
<dbReference type="KEGG" id="sce:YDR189W"/>
<dbReference type="AGR" id="SGD:S000002597"/>
<dbReference type="SGD" id="S000002597">
    <property type="gene designation" value="SLY1"/>
</dbReference>
<dbReference type="VEuPathDB" id="FungiDB:YDR189W"/>
<dbReference type="eggNOG" id="KOG1301">
    <property type="taxonomic scope" value="Eukaryota"/>
</dbReference>
<dbReference type="GeneTree" id="ENSGT00550000074845"/>
<dbReference type="HOGENOM" id="CLU_016216_3_1_1"/>
<dbReference type="InParanoid" id="P22213"/>
<dbReference type="OMA" id="VNDLRAW"/>
<dbReference type="OrthoDB" id="10251230at2759"/>
<dbReference type="BioCyc" id="YEAST:G3O-29777-MONOMER"/>
<dbReference type="Reactome" id="R-SCE-204005">
    <property type="pathway name" value="COPII-mediated vesicle transport"/>
</dbReference>
<dbReference type="Reactome" id="R-SCE-8980692">
    <property type="pathway name" value="RHOA GTPase cycle"/>
</dbReference>
<dbReference type="BioGRID-ORCS" id="851770">
    <property type="hits" value="5 hits in 10 CRISPR screens"/>
</dbReference>
<dbReference type="EvolutionaryTrace" id="P22213"/>
<dbReference type="PRO" id="PR:P22213"/>
<dbReference type="Proteomes" id="UP000002311">
    <property type="component" value="Chromosome IV"/>
</dbReference>
<dbReference type="RNAct" id="P22213">
    <property type="molecule type" value="protein"/>
</dbReference>
<dbReference type="GO" id="GO:0030134">
    <property type="term" value="C:COPII-coated ER to Golgi transport vesicle"/>
    <property type="evidence" value="ECO:0000314"/>
    <property type="project" value="SGD"/>
</dbReference>
<dbReference type="GO" id="GO:0005737">
    <property type="term" value="C:cytoplasm"/>
    <property type="evidence" value="ECO:0000303"/>
    <property type="project" value="UniProtKB"/>
</dbReference>
<dbReference type="GO" id="GO:0005829">
    <property type="term" value="C:cytosol"/>
    <property type="evidence" value="ECO:0007005"/>
    <property type="project" value="SGD"/>
</dbReference>
<dbReference type="GO" id="GO:0005783">
    <property type="term" value="C:endoplasmic reticulum"/>
    <property type="evidence" value="ECO:0000314"/>
    <property type="project" value="SGD"/>
</dbReference>
<dbReference type="GO" id="GO:0000139">
    <property type="term" value="C:Golgi membrane"/>
    <property type="evidence" value="ECO:0000314"/>
    <property type="project" value="SGD"/>
</dbReference>
<dbReference type="GO" id="GO:0016020">
    <property type="term" value="C:membrane"/>
    <property type="evidence" value="ECO:0000303"/>
    <property type="project" value="UniProtKB"/>
</dbReference>
<dbReference type="GO" id="GO:0000149">
    <property type="term" value="F:SNARE binding"/>
    <property type="evidence" value="ECO:0000314"/>
    <property type="project" value="SGD"/>
</dbReference>
<dbReference type="GO" id="GO:0019905">
    <property type="term" value="F:syntaxin binding"/>
    <property type="evidence" value="ECO:0000314"/>
    <property type="project" value="SGD"/>
</dbReference>
<dbReference type="GO" id="GO:0006888">
    <property type="term" value="P:endoplasmic reticulum to Golgi vesicle-mediated transport"/>
    <property type="evidence" value="ECO:0000315"/>
    <property type="project" value="SGD"/>
</dbReference>
<dbReference type="GO" id="GO:0006886">
    <property type="term" value="P:intracellular protein transport"/>
    <property type="evidence" value="ECO:0000318"/>
    <property type="project" value="GO_Central"/>
</dbReference>
<dbReference type="GO" id="GO:0035543">
    <property type="term" value="P:positive regulation of SNARE complex assembly"/>
    <property type="evidence" value="ECO:0000315"/>
    <property type="project" value="SGD"/>
</dbReference>
<dbReference type="GO" id="GO:0046578">
    <property type="term" value="P:regulation of Ras protein signal transduction"/>
    <property type="evidence" value="ECO:0000315"/>
    <property type="project" value="UniProtKB"/>
</dbReference>
<dbReference type="GO" id="GO:0006890">
    <property type="term" value="P:retrograde vesicle-mediated transport, Golgi to endoplasmic reticulum"/>
    <property type="evidence" value="ECO:0000315"/>
    <property type="project" value="SGD"/>
</dbReference>
<dbReference type="GO" id="GO:0048280">
    <property type="term" value="P:vesicle fusion with Golgi apparatus"/>
    <property type="evidence" value="ECO:0000315"/>
    <property type="project" value="SGD"/>
</dbReference>
<dbReference type="FunFam" id="3.40.50.2060:FF:000011">
    <property type="entry name" value="SLY1 protein"/>
    <property type="match status" value="1"/>
</dbReference>
<dbReference type="Gene3D" id="1.25.40.60">
    <property type="match status" value="1"/>
</dbReference>
<dbReference type="Gene3D" id="3.40.50.1910">
    <property type="match status" value="1"/>
</dbReference>
<dbReference type="Gene3D" id="3.40.50.2060">
    <property type="match status" value="1"/>
</dbReference>
<dbReference type="Gene3D" id="3.90.830.10">
    <property type="entry name" value="Syntaxin Binding Protein 1, Chain A, domain 2"/>
    <property type="match status" value="1"/>
</dbReference>
<dbReference type="InterPro" id="IPR043154">
    <property type="entry name" value="Sec-1-like_dom1"/>
</dbReference>
<dbReference type="InterPro" id="IPR043127">
    <property type="entry name" value="Sec-1-like_dom3a"/>
</dbReference>
<dbReference type="InterPro" id="IPR001619">
    <property type="entry name" value="Sec1-like"/>
</dbReference>
<dbReference type="InterPro" id="IPR027482">
    <property type="entry name" value="Sec1-like_dom2"/>
</dbReference>
<dbReference type="InterPro" id="IPR036045">
    <property type="entry name" value="Sec1-like_sf"/>
</dbReference>
<dbReference type="PANTHER" id="PTHR11679">
    <property type="entry name" value="VESICLE PROTEIN SORTING-ASSOCIATED"/>
    <property type="match status" value="1"/>
</dbReference>
<dbReference type="Pfam" id="PF00995">
    <property type="entry name" value="Sec1"/>
    <property type="match status" value="1"/>
</dbReference>
<dbReference type="PIRSF" id="PIRSF005715">
    <property type="entry name" value="VPS45_Sec1"/>
    <property type="match status" value="1"/>
</dbReference>
<dbReference type="SUPFAM" id="SSF56815">
    <property type="entry name" value="Sec1/munc18-like (SM) proteins"/>
    <property type="match status" value="1"/>
</dbReference>
<protein>
    <recommendedName>
        <fullName>Protein SLY1</fullName>
    </recommendedName>
    <alternativeName>
        <fullName>Suppressor of loss of YPT1 protein 1</fullName>
    </alternativeName>
</protein>
<evidence type="ECO:0000269" key="1">
    <source>
    </source>
</evidence>
<evidence type="ECO:0000269" key="2">
    <source>
    </source>
</evidence>
<evidence type="ECO:0000305" key="3"/>
<evidence type="ECO:0007829" key="4">
    <source>
        <dbReference type="PDB" id="1MQS"/>
    </source>
</evidence>
<reference key="1">
    <citation type="journal article" date="1991" name="Mol. Cell. Biol.">
        <title>Identification and structure of four yeast genes (SLY) that are able to suppress the functional loss of YPT1, a member of the RAS superfamily.</title>
        <authorList>
            <person name="Dascher C."/>
            <person name="Ossig R."/>
            <person name="Gallwitz D."/>
            <person name="Schmitt H.D."/>
        </authorList>
    </citation>
    <scope>NUCLEOTIDE SEQUENCE [GENOMIC DNA]</scope>
</reference>
<reference key="2">
    <citation type="journal article" date="1997" name="Nature">
        <title>The nucleotide sequence of Saccharomyces cerevisiae chromosome IV.</title>
        <authorList>
            <person name="Jacq C."/>
            <person name="Alt-Moerbe J."/>
            <person name="Andre B."/>
            <person name="Arnold W."/>
            <person name="Bahr A."/>
            <person name="Ballesta J.P.G."/>
            <person name="Bargues M."/>
            <person name="Baron L."/>
            <person name="Becker A."/>
            <person name="Biteau N."/>
            <person name="Bloecker H."/>
            <person name="Blugeon C."/>
            <person name="Boskovic J."/>
            <person name="Brandt P."/>
            <person name="Brueckner M."/>
            <person name="Buitrago M.J."/>
            <person name="Coster F."/>
            <person name="Delaveau T."/>
            <person name="del Rey F."/>
            <person name="Dujon B."/>
            <person name="Eide L.G."/>
            <person name="Garcia-Cantalejo J.M."/>
            <person name="Goffeau A."/>
            <person name="Gomez-Peris A."/>
            <person name="Granotier C."/>
            <person name="Hanemann V."/>
            <person name="Hankeln T."/>
            <person name="Hoheisel J.D."/>
            <person name="Jaeger W."/>
            <person name="Jimenez A."/>
            <person name="Jonniaux J.-L."/>
            <person name="Kraemer C."/>
            <person name="Kuester H."/>
            <person name="Laamanen P."/>
            <person name="Legros Y."/>
            <person name="Louis E.J."/>
            <person name="Moeller-Rieker S."/>
            <person name="Monnet A."/>
            <person name="Moro M."/>
            <person name="Mueller-Auer S."/>
            <person name="Nussbaumer B."/>
            <person name="Paricio N."/>
            <person name="Paulin L."/>
            <person name="Perea J."/>
            <person name="Perez-Alonso M."/>
            <person name="Perez-Ortin J.E."/>
            <person name="Pohl T.M."/>
            <person name="Prydz H."/>
            <person name="Purnelle B."/>
            <person name="Rasmussen S.W."/>
            <person name="Remacha M.A."/>
            <person name="Revuelta J.L."/>
            <person name="Rieger M."/>
            <person name="Salom D."/>
            <person name="Saluz H.P."/>
            <person name="Saiz J.E."/>
            <person name="Saren A.-M."/>
            <person name="Schaefer M."/>
            <person name="Scharfe M."/>
            <person name="Schmidt E.R."/>
            <person name="Schneider C."/>
            <person name="Scholler P."/>
            <person name="Schwarz S."/>
            <person name="Soler-Mira A."/>
            <person name="Urrestarazu L.A."/>
            <person name="Verhasselt P."/>
            <person name="Vissers S."/>
            <person name="Voet M."/>
            <person name="Volckaert G."/>
            <person name="Wagner G."/>
            <person name="Wambutt R."/>
            <person name="Wedler E."/>
            <person name="Wedler H."/>
            <person name="Woelfl S."/>
            <person name="Harris D.E."/>
            <person name="Bowman S."/>
            <person name="Brown D."/>
            <person name="Churcher C.M."/>
            <person name="Connor R."/>
            <person name="Dedman K."/>
            <person name="Gentles S."/>
            <person name="Hamlin N."/>
            <person name="Hunt S."/>
            <person name="Jones L."/>
            <person name="McDonald S."/>
            <person name="Murphy L.D."/>
            <person name="Niblett D."/>
            <person name="Odell C."/>
            <person name="Oliver K."/>
            <person name="Rajandream M.A."/>
            <person name="Richards C."/>
            <person name="Shore L."/>
            <person name="Walsh S.V."/>
            <person name="Barrell B.G."/>
            <person name="Dietrich F.S."/>
            <person name="Mulligan J.T."/>
            <person name="Allen E."/>
            <person name="Araujo R."/>
            <person name="Aviles E."/>
            <person name="Berno A."/>
            <person name="Carpenter J."/>
            <person name="Chen E."/>
            <person name="Cherry J.M."/>
            <person name="Chung E."/>
            <person name="Duncan M."/>
            <person name="Hunicke-Smith S."/>
            <person name="Hyman R.W."/>
            <person name="Komp C."/>
            <person name="Lashkari D."/>
            <person name="Lew H."/>
            <person name="Lin D."/>
            <person name="Mosedale D."/>
            <person name="Nakahara K."/>
            <person name="Namath A."/>
            <person name="Oefner P."/>
            <person name="Oh C."/>
            <person name="Petel F.X."/>
            <person name="Roberts D."/>
            <person name="Schramm S."/>
            <person name="Schroeder M."/>
            <person name="Shogren T."/>
            <person name="Shroff N."/>
            <person name="Winant A."/>
            <person name="Yelton M.A."/>
            <person name="Botstein D."/>
            <person name="Davis R.W."/>
            <person name="Johnston M."/>
            <person name="Andrews S."/>
            <person name="Brinkman R."/>
            <person name="Cooper J."/>
            <person name="Ding H."/>
            <person name="Du Z."/>
            <person name="Favello A."/>
            <person name="Fulton L."/>
            <person name="Gattung S."/>
            <person name="Greco T."/>
            <person name="Hallsworth K."/>
            <person name="Hawkins J."/>
            <person name="Hillier L.W."/>
            <person name="Jier M."/>
            <person name="Johnson D."/>
            <person name="Johnston L."/>
            <person name="Kirsten J."/>
            <person name="Kucaba T."/>
            <person name="Langston Y."/>
            <person name="Latreille P."/>
            <person name="Le T."/>
            <person name="Mardis E."/>
            <person name="Menezes S."/>
            <person name="Miller N."/>
            <person name="Nhan M."/>
            <person name="Pauley A."/>
            <person name="Peluso D."/>
            <person name="Rifkin L."/>
            <person name="Riles L."/>
            <person name="Taich A."/>
            <person name="Trevaskis E."/>
            <person name="Vignati D."/>
            <person name="Wilcox L."/>
            <person name="Wohldman P."/>
            <person name="Vaudin M."/>
            <person name="Wilson R."/>
            <person name="Waterston R."/>
            <person name="Albermann K."/>
            <person name="Hani J."/>
            <person name="Heumann K."/>
            <person name="Kleine K."/>
            <person name="Mewes H.-W."/>
            <person name="Zollner A."/>
            <person name="Zaccaria P."/>
        </authorList>
    </citation>
    <scope>NUCLEOTIDE SEQUENCE [LARGE SCALE GENOMIC DNA]</scope>
    <source>
        <strain>ATCC 204508 / S288c</strain>
    </source>
</reference>
<reference key="3">
    <citation type="journal article" date="2014" name="G3 (Bethesda)">
        <title>The reference genome sequence of Saccharomyces cerevisiae: Then and now.</title>
        <authorList>
            <person name="Engel S.R."/>
            <person name="Dietrich F.S."/>
            <person name="Fisk D.G."/>
            <person name="Binkley G."/>
            <person name="Balakrishnan R."/>
            <person name="Costanzo M.C."/>
            <person name="Dwight S.S."/>
            <person name="Hitz B.C."/>
            <person name="Karra K."/>
            <person name="Nash R.S."/>
            <person name="Weng S."/>
            <person name="Wong E.D."/>
            <person name="Lloyd P."/>
            <person name="Skrzypek M.S."/>
            <person name="Miyasato S.R."/>
            <person name="Simison M."/>
            <person name="Cherry J.M."/>
        </authorList>
    </citation>
    <scope>GENOME REANNOTATION</scope>
    <source>
        <strain>ATCC 204508 / S288c</strain>
    </source>
</reference>
<reference key="4">
    <citation type="journal article" date="2003" name="Nature">
        <title>Global analysis of protein expression in yeast.</title>
        <authorList>
            <person name="Ghaemmaghami S."/>
            <person name="Huh W.-K."/>
            <person name="Bower K."/>
            <person name="Howson R.W."/>
            <person name="Belle A."/>
            <person name="Dephoure N."/>
            <person name="O'Shea E.K."/>
            <person name="Weissman J.S."/>
        </authorList>
    </citation>
    <scope>LEVEL OF PROTEIN EXPRESSION [LARGE SCALE ANALYSIS]</scope>
</reference>
<reference key="5">
    <citation type="journal article" date="2012" name="Proc. Natl. Acad. Sci. U.S.A.">
        <title>N-terminal acetylome analyses and functional insights of the N-terminal acetyltransferase NatB.</title>
        <authorList>
            <person name="Van Damme P."/>
            <person name="Lasa M."/>
            <person name="Polevoda B."/>
            <person name="Gazquez C."/>
            <person name="Elosegui-Artola A."/>
            <person name="Kim D.S."/>
            <person name="De Juan-Pardo E."/>
            <person name="Demeyer K."/>
            <person name="Hole K."/>
            <person name="Larrea E."/>
            <person name="Timmerman E."/>
            <person name="Prieto J."/>
            <person name="Arnesen T."/>
            <person name="Sherman F."/>
            <person name="Gevaert K."/>
            <person name="Aldabe R."/>
        </authorList>
    </citation>
    <scope>IDENTIFICATION BY MASS SPECTROMETRY [LARGE SCALE ANALYSIS]</scope>
</reference>
<reference key="6">
    <citation type="journal article" date="2002" name="EMBO J.">
        <title>Structural basis for the Golgi membrane recruitment of Sly1p by Sed5p.</title>
        <authorList>
            <person name="Bracher A."/>
            <person name="Weissenhorn W."/>
        </authorList>
    </citation>
    <scope>X-RAY CRYSTALLOGRAPHY (3.0 ANGSTROMS) IN COMPLEX WITH SED5</scope>
</reference>
<keyword id="KW-0002">3D-structure</keyword>
<keyword id="KW-0963">Cytoplasm</keyword>
<keyword id="KW-0472">Membrane</keyword>
<keyword id="KW-0653">Protein transport</keyword>
<keyword id="KW-1185">Reference proteome</keyword>
<keyword id="KW-0677">Repeat</keyword>
<keyword id="KW-0813">Transport</keyword>
<feature type="chain" id="PRO_0000206299" description="Protein SLY1">
    <location>
        <begin position="1"/>
        <end position="666"/>
    </location>
</feature>
<feature type="repeat" description="1">
    <location>
        <begin position="106"/>
        <end position="142"/>
    </location>
</feature>
<feature type="repeat" description="2">
    <location>
        <begin position="220"/>
        <end position="257"/>
    </location>
</feature>
<feature type="repeat" description="3">
    <location>
        <begin position="436"/>
        <end position="474"/>
    </location>
</feature>
<feature type="repeat" description="4">
    <location>
        <begin position="478"/>
        <end position="514"/>
    </location>
</feature>
<feature type="region of interest" description="4 X approximate repeats">
    <location>
        <begin position="106"/>
        <end position="514"/>
    </location>
</feature>
<feature type="sequence variant" description="In SLY1-20 mutant.">
    <original>E</original>
    <variation>K</variation>
    <location>
        <position position="532"/>
    </location>
</feature>
<feature type="helix" evidence="4">
    <location>
        <begin position="14"/>
        <end position="26"/>
    </location>
</feature>
<feature type="turn" evidence="4">
    <location>
        <begin position="27"/>
        <end position="33"/>
    </location>
</feature>
<feature type="helix" evidence="4">
    <location>
        <begin position="43"/>
        <end position="49"/>
    </location>
</feature>
<feature type="strand" evidence="4">
    <location>
        <begin position="54"/>
        <end position="58"/>
    </location>
</feature>
<feature type="helix" evidence="4">
    <location>
        <begin position="60"/>
        <end position="66"/>
    </location>
</feature>
<feature type="turn" evidence="4">
    <location>
        <begin position="67"/>
        <end position="69"/>
    </location>
</feature>
<feature type="helix" evidence="4">
    <location>
        <begin position="72"/>
        <end position="77"/>
    </location>
</feature>
<feature type="strand" evidence="4">
    <location>
        <begin position="80"/>
        <end position="85"/>
    </location>
</feature>
<feature type="strand" evidence="4">
    <location>
        <begin position="93"/>
        <end position="102"/>
    </location>
</feature>
<feature type="helix" evidence="4">
    <location>
        <begin position="106"/>
        <end position="118"/>
    </location>
</feature>
<feature type="strand" evidence="4">
    <location>
        <begin position="121"/>
        <end position="130"/>
    </location>
</feature>
<feature type="helix" evidence="4">
    <location>
        <begin position="134"/>
        <end position="145"/>
    </location>
</feature>
<feature type="helix" evidence="4">
    <location>
        <begin position="150"/>
        <end position="152"/>
    </location>
</feature>
<feature type="strand" evidence="4">
    <location>
        <begin position="153"/>
        <end position="158"/>
    </location>
</feature>
<feature type="strand" evidence="4">
    <location>
        <begin position="163"/>
        <end position="165"/>
    </location>
</feature>
<feature type="strand" evidence="4">
    <location>
        <begin position="170"/>
        <end position="172"/>
    </location>
</feature>
<feature type="helix" evidence="4">
    <location>
        <begin position="178"/>
        <end position="183"/>
    </location>
</feature>
<feature type="strand" evidence="4">
    <location>
        <begin position="185"/>
        <end position="187"/>
    </location>
</feature>
<feature type="helix" evidence="4">
    <location>
        <begin position="191"/>
        <end position="210"/>
    </location>
</feature>
<feature type="strand" evidence="4">
    <location>
        <begin position="215"/>
        <end position="218"/>
    </location>
</feature>
<feature type="strand" evidence="4">
    <location>
        <begin position="220"/>
        <end position="222"/>
    </location>
</feature>
<feature type="helix" evidence="4">
    <location>
        <begin position="223"/>
        <end position="240"/>
    </location>
</feature>
<feature type="strand" evidence="4">
    <location>
        <begin position="260"/>
        <end position="265"/>
    </location>
</feature>
<feature type="helix" evidence="4">
    <location>
        <begin position="266"/>
        <end position="268"/>
    </location>
</feature>
<feature type="helix" evidence="4">
    <location>
        <begin position="271"/>
        <end position="274"/>
    </location>
</feature>
<feature type="helix" evidence="4">
    <location>
        <begin position="280"/>
        <end position="287"/>
    </location>
</feature>
<feature type="strand" evidence="4">
    <location>
        <begin position="295"/>
        <end position="297"/>
    </location>
</feature>
<feature type="strand" evidence="4">
    <location>
        <begin position="317"/>
        <end position="319"/>
    </location>
</feature>
<feature type="helix" evidence="4">
    <location>
        <begin position="328"/>
        <end position="331"/>
    </location>
</feature>
<feature type="strand" evidence="4">
    <location>
        <begin position="332"/>
        <end position="335"/>
    </location>
</feature>
<feature type="helix" evidence="4">
    <location>
        <begin position="336"/>
        <end position="360"/>
    </location>
</feature>
<feature type="helix" evidence="4">
    <location>
        <begin position="388"/>
        <end position="412"/>
    </location>
</feature>
<feature type="turn" evidence="4">
    <location>
        <begin position="413"/>
        <end position="415"/>
    </location>
</feature>
<feature type="helix" evidence="4">
    <location>
        <begin position="417"/>
        <end position="422"/>
    </location>
</feature>
<feature type="helix" evidence="4">
    <location>
        <begin position="429"/>
        <end position="438"/>
    </location>
</feature>
<feature type="helix" evidence="4">
    <location>
        <begin position="447"/>
        <end position="460"/>
    </location>
</feature>
<feature type="helix" evidence="4">
    <location>
        <begin position="467"/>
        <end position="478"/>
    </location>
</feature>
<feature type="turn" evidence="4">
    <location>
        <begin position="479"/>
        <end position="481"/>
    </location>
</feature>
<feature type="helix" evidence="4">
    <location>
        <begin position="486"/>
        <end position="503"/>
    </location>
</feature>
<feature type="helix" evidence="4">
    <location>
        <begin position="529"/>
        <end position="533"/>
    </location>
</feature>
<feature type="turn" evidence="4">
    <location>
        <begin position="534"/>
        <end position="536"/>
    </location>
</feature>
<feature type="strand" evidence="4">
    <location>
        <begin position="540"/>
        <end position="542"/>
    </location>
</feature>
<feature type="helix" evidence="4">
    <location>
        <begin position="543"/>
        <end position="548"/>
    </location>
</feature>
<feature type="helix" evidence="4">
    <location>
        <begin position="557"/>
        <end position="566"/>
    </location>
</feature>
<feature type="helix" evidence="4">
    <location>
        <begin position="573"/>
        <end position="579"/>
    </location>
</feature>
<feature type="strand" evidence="4">
    <location>
        <begin position="582"/>
        <end position="585"/>
    </location>
</feature>
<feature type="strand" evidence="4">
    <location>
        <begin position="589"/>
        <end position="591"/>
    </location>
</feature>
<feature type="strand" evidence="4">
    <location>
        <begin position="593"/>
        <end position="595"/>
    </location>
</feature>
<feature type="strand" evidence="4">
    <location>
        <begin position="604"/>
        <end position="611"/>
    </location>
</feature>
<feature type="helix" evidence="4">
    <location>
        <begin position="616"/>
        <end position="626"/>
    </location>
</feature>
<feature type="strand" evidence="4">
    <location>
        <begin position="635"/>
        <end position="643"/>
    </location>
</feature>
<feature type="helix" evidence="4">
    <location>
        <begin position="646"/>
        <end position="659"/>
    </location>
</feature>
<organism>
    <name type="scientific">Saccharomyces cerevisiae (strain ATCC 204508 / S288c)</name>
    <name type="common">Baker's yeast</name>
    <dbReference type="NCBI Taxonomy" id="559292"/>
    <lineage>
        <taxon>Eukaryota</taxon>
        <taxon>Fungi</taxon>
        <taxon>Dikarya</taxon>
        <taxon>Ascomycota</taxon>
        <taxon>Saccharomycotina</taxon>
        <taxon>Saccharomycetes</taxon>
        <taxon>Saccharomycetales</taxon>
        <taxon>Saccharomycetaceae</taxon>
        <taxon>Saccharomyces</taxon>
    </lineage>
</organism>
<accession>P22213</accession>
<accession>D6VSH2</accession>
<comment type="function">
    <text>Able to suppress the functional loss of YPT1. SLY1 is essential for cell viability. May interact indirectly, or directly with YPT1.</text>
</comment>
<comment type="subunit">
    <text evidence="1">Interacts with SED5.</text>
</comment>
<comment type="interaction">
    <interactant intactId="EBI-17387">
        <id>P22213</id>
    </interactant>
    <interactant intactId="EBI-16930">
        <id>Q01590</id>
        <label>SED5</label>
    </interactant>
    <organismsDiffer>false</organismsDiffer>
    <experiments>6</experiments>
</comment>
<comment type="interaction">
    <interactant intactId="EBI-17387">
        <id>P22213</id>
    </interactant>
    <interactant intactId="EBI-20016">
        <id>P41834</id>
        <label>UFE1</label>
    </interactant>
    <organismsDiffer>false</organismsDiffer>
    <experiments>4</experiments>
</comment>
<comment type="subcellular location">
    <subcellularLocation>
        <location>Cytoplasm</location>
    </subcellularLocation>
    <subcellularLocation>
        <location>Membrane</location>
        <topology>Peripheral membrane protein</topology>
    </subcellularLocation>
</comment>
<comment type="miscellaneous">
    <text evidence="2">Present with 5780 molecules/cell in log phase SD medium.</text>
</comment>
<comment type="similarity">
    <text evidence="3">Belongs to the STXBP/unc-18/SEC1 family.</text>
</comment>
<sequence length="666" mass="74679">MAVEEIASRKDISLRDMQISAILKMLFLNKDLNNNDNITTITDDIFNQQEIIWKVLILDIKSTATISSVLRVNDLLKAGITVHSLIKQDRSPLPDVPAIYFVSPTKENIDIIVNDLKSDKYSEFYINFTSSLPRNLLEDLAQQVSITGKSDKIKQVYDQYLDFIVTEPELFSLEISNAYLTLNDPKTTEEEITGLCANIADGLFNTVLTINSIPIIRAAKGGPAEIIAEKLGTKLRDFVINTNSSSTSTLQGNDSLERGVLIILDRNIDFASMFSHSWIYQCMVFDIFKLSRNTVTIPLESKENGTDNTTAKPLATKKYDIEPNDFFWMENSHLPFPEAAENVEAALNTYKEEAAEITRKTGVTNISDLDPNSNNDTVQIQEVVKKLPELTAKKNTIDTHMNIFAALLSQLESKSLDTFFEVEQDPGSTKTRSRFLDILKDGKTNNLEDKLRSFIVLYLTSTTGLPKDFVQNVENYFKENDYDINALKYVYKLREFMQLSNMSLQNKSLEDGSDSAFKPSNLTLSGIYGLTEGKLQGGVGSLISGIKKLLPEKKTIPITNVVDAIMDPLNSSQKNLETTDSYLYIDPKITRGSHTRKPKRQSYNKSLVFVVGGGNYLEYQNLQEWAHSQLHNPKKVMYGSTAITTPAEFLNEISRLGASNSSNNDA</sequence>
<gene>
    <name type="primary">SLY1</name>
    <name type="ordered locus">YDR189W</name>
    <name type="ORF">YD9346.01</name>
    <name type="ORF">YD9395.22</name>
</gene>
<proteinExistence type="evidence at protein level"/>
<name>SLY1_YEAST</name>